<proteinExistence type="inferred from homology"/>
<comment type="function">
    <text evidence="1">Binds together with bS18 to 16S ribosomal RNA.</text>
</comment>
<comment type="similarity">
    <text evidence="1">Belongs to the bacterial ribosomal protein bS6 family.</text>
</comment>
<evidence type="ECO:0000255" key="1">
    <source>
        <dbReference type="HAMAP-Rule" id="MF_00360"/>
    </source>
</evidence>
<evidence type="ECO:0000256" key="2">
    <source>
        <dbReference type="SAM" id="MobiDB-lite"/>
    </source>
</evidence>
<evidence type="ECO:0000305" key="3"/>
<sequence>MRHYEIVFMVHPDQSEQVPGMIERYTAAITGAEGKIHRLEDWGRRQLAYPINKLHKAHYVLMNVEAPQEVIDELETTFRFNDAVIRSMVMRTKHAVTEASPMVKAKDERRERRDDFANETADDAEAGDSEE</sequence>
<protein>
    <recommendedName>
        <fullName evidence="1">Small ribosomal subunit protein bS6</fullName>
    </recommendedName>
    <alternativeName>
        <fullName evidence="3">30S ribosomal protein S6</fullName>
    </alternativeName>
</protein>
<reference key="1">
    <citation type="submission" date="2008-05" db="EMBL/GenBank/DDBJ databases">
        <title>Complete sequence of Shigella boydii serotype 18 strain BS512.</title>
        <authorList>
            <person name="Rasko D.A."/>
            <person name="Rosovitz M."/>
            <person name="Maurelli A.T."/>
            <person name="Myers G."/>
            <person name="Seshadri R."/>
            <person name="Cer R."/>
            <person name="Jiang L."/>
            <person name="Ravel J."/>
            <person name="Sebastian Y."/>
        </authorList>
    </citation>
    <scope>NUCLEOTIDE SEQUENCE [LARGE SCALE GENOMIC DNA]</scope>
    <source>
        <strain>CDC 3083-94 / BS512</strain>
    </source>
</reference>
<gene>
    <name evidence="1" type="primary">rpsF</name>
    <name type="ordered locus">SbBS512_E4733</name>
</gene>
<keyword id="KW-0007">Acetylation</keyword>
<keyword id="KW-1185">Reference proteome</keyword>
<keyword id="KW-0687">Ribonucleoprotein</keyword>
<keyword id="KW-0689">Ribosomal protein</keyword>
<keyword id="KW-0694">RNA-binding</keyword>
<keyword id="KW-0699">rRNA-binding</keyword>
<accession>B2TY73</accession>
<organism>
    <name type="scientific">Shigella boydii serotype 18 (strain CDC 3083-94 / BS512)</name>
    <dbReference type="NCBI Taxonomy" id="344609"/>
    <lineage>
        <taxon>Bacteria</taxon>
        <taxon>Pseudomonadati</taxon>
        <taxon>Pseudomonadota</taxon>
        <taxon>Gammaproteobacteria</taxon>
        <taxon>Enterobacterales</taxon>
        <taxon>Enterobacteriaceae</taxon>
        <taxon>Shigella</taxon>
    </lineage>
</organism>
<name>RS6_SHIB3</name>
<feature type="chain" id="PRO_1000120806" description="Small ribosomal subunit protein bS6">
    <location>
        <begin position="1"/>
        <end position="131"/>
    </location>
</feature>
<feature type="region of interest" description="Disordered" evidence="2">
    <location>
        <begin position="98"/>
        <end position="131"/>
    </location>
</feature>
<feature type="compositionally biased region" description="Basic and acidic residues" evidence="2">
    <location>
        <begin position="104"/>
        <end position="116"/>
    </location>
</feature>
<feature type="compositionally biased region" description="Acidic residues" evidence="2">
    <location>
        <begin position="120"/>
        <end position="131"/>
    </location>
</feature>
<feature type="modified residue" description="N6-acetyllysine" evidence="1">
    <location>
        <position position="93"/>
    </location>
</feature>
<dbReference type="EMBL" id="CP001063">
    <property type="protein sequence ID" value="ACD10501.1"/>
    <property type="molecule type" value="Genomic_DNA"/>
</dbReference>
<dbReference type="RefSeq" id="WP_001216676.1">
    <property type="nucleotide sequence ID" value="NC_010658.1"/>
</dbReference>
<dbReference type="SMR" id="B2TY73"/>
<dbReference type="STRING" id="344609.SbBS512_E4733"/>
<dbReference type="GeneID" id="93777623"/>
<dbReference type="KEGG" id="sbc:SbBS512_E4733"/>
<dbReference type="HOGENOM" id="CLU_113441_6_1_6"/>
<dbReference type="Proteomes" id="UP000001030">
    <property type="component" value="Chromosome"/>
</dbReference>
<dbReference type="GO" id="GO:0022627">
    <property type="term" value="C:cytosolic small ribosomal subunit"/>
    <property type="evidence" value="ECO:0007669"/>
    <property type="project" value="TreeGrafter"/>
</dbReference>
<dbReference type="GO" id="GO:0070181">
    <property type="term" value="F:small ribosomal subunit rRNA binding"/>
    <property type="evidence" value="ECO:0007669"/>
    <property type="project" value="TreeGrafter"/>
</dbReference>
<dbReference type="GO" id="GO:0003735">
    <property type="term" value="F:structural constituent of ribosome"/>
    <property type="evidence" value="ECO:0007669"/>
    <property type="project" value="InterPro"/>
</dbReference>
<dbReference type="GO" id="GO:0006412">
    <property type="term" value="P:translation"/>
    <property type="evidence" value="ECO:0007669"/>
    <property type="project" value="UniProtKB-UniRule"/>
</dbReference>
<dbReference type="CDD" id="cd00473">
    <property type="entry name" value="bS6"/>
    <property type="match status" value="1"/>
</dbReference>
<dbReference type="FunFam" id="3.30.70.60:FF:000003">
    <property type="entry name" value="30S ribosomal protein S6"/>
    <property type="match status" value="1"/>
</dbReference>
<dbReference type="Gene3D" id="3.30.70.60">
    <property type="match status" value="1"/>
</dbReference>
<dbReference type="HAMAP" id="MF_00360">
    <property type="entry name" value="Ribosomal_bS6"/>
    <property type="match status" value="1"/>
</dbReference>
<dbReference type="InterPro" id="IPR000529">
    <property type="entry name" value="Ribosomal_bS6"/>
</dbReference>
<dbReference type="InterPro" id="IPR020815">
    <property type="entry name" value="Ribosomal_bS6_CS"/>
</dbReference>
<dbReference type="InterPro" id="IPR035980">
    <property type="entry name" value="Ribosomal_bS6_sf"/>
</dbReference>
<dbReference type="InterPro" id="IPR020814">
    <property type="entry name" value="Ribosomal_S6_plastid/chlpt"/>
</dbReference>
<dbReference type="InterPro" id="IPR014717">
    <property type="entry name" value="Transl_elong_EF1B/ribsomal_bS6"/>
</dbReference>
<dbReference type="NCBIfam" id="TIGR00166">
    <property type="entry name" value="S6"/>
    <property type="match status" value="1"/>
</dbReference>
<dbReference type="PANTHER" id="PTHR21011">
    <property type="entry name" value="MITOCHONDRIAL 28S RIBOSOMAL PROTEIN S6"/>
    <property type="match status" value="1"/>
</dbReference>
<dbReference type="PANTHER" id="PTHR21011:SF1">
    <property type="entry name" value="SMALL RIBOSOMAL SUBUNIT PROTEIN BS6M"/>
    <property type="match status" value="1"/>
</dbReference>
<dbReference type="Pfam" id="PF01250">
    <property type="entry name" value="Ribosomal_S6"/>
    <property type="match status" value="1"/>
</dbReference>
<dbReference type="SUPFAM" id="SSF54995">
    <property type="entry name" value="Ribosomal protein S6"/>
    <property type="match status" value="1"/>
</dbReference>
<dbReference type="PROSITE" id="PS01048">
    <property type="entry name" value="RIBOSOMAL_S6"/>
    <property type="match status" value="1"/>
</dbReference>